<evidence type="ECO:0000255" key="1">
    <source>
        <dbReference type="HAMAP-Rule" id="MF_00318"/>
    </source>
</evidence>
<accession>A5VQQ7</accession>
<proteinExistence type="inferred from homology"/>
<keyword id="KW-0963">Cytoplasm</keyword>
<keyword id="KW-0324">Glycolysis</keyword>
<keyword id="KW-0456">Lyase</keyword>
<keyword id="KW-0460">Magnesium</keyword>
<keyword id="KW-0479">Metal-binding</keyword>
<keyword id="KW-0964">Secreted</keyword>
<feature type="chain" id="PRO_1000019190" description="Enolase">
    <location>
        <begin position="1"/>
        <end position="425"/>
    </location>
</feature>
<feature type="active site" description="Proton donor" evidence="1">
    <location>
        <position position="204"/>
    </location>
</feature>
<feature type="active site" description="Proton acceptor" evidence="1">
    <location>
        <position position="336"/>
    </location>
</feature>
<feature type="binding site" evidence="1">
    <location>
        <position position="162"/>
    </location>
    <ligand>
        <name>(2R)-2-phosphoglycerate</name>
        <dbReference type="ChEBI" id="CHEBI:58289"/>
    </ligand>
</feature>
<feature type="binding site" evidence="1">
    <location>
        <position position="241"/>
    </location>
    <ligand>
        <name>Mg(2+)</name>
        <dbReference type="ChEBI" id="CHEBI:18420"/>
    </ligand>
</feature>
<feature type="binding site" evidence="1">
    <location>
        <position position="284"/>
    </location>
    <ligand>
        <name>Mg(2+)</name>
        <dbReference type="ChEBI" id="CHEBI:18420"/>
    </ligand>
</feature>
<feature type="binding site" evidence="1">
    <location>
        <position position="311"/>
    </location>
    <ligand>
        <name>Mg(2+)</name>
        <dbReference type="ChEBI" id="CHEBI:18420"/>
    </ligand>
</feature>
<feature type="binding site" evidence="1">
    <location>
        <position position="336"/>
    </location>
    <ligand>
        <name>(2R)-2-phosphoglycerate</name>
        <dbReference type="ChEBI" id="CHEBI:58289"/>
    </ligand>
</feature>
<feature type="binding site" evidence="1">
    <location>
        <position position="365"/>
    </location>
    <ligand>
        <name>(2R)-2-phosphoglycerate</name>
        <dbReference type="ChEBI" id="CHEBI:58289"/>
    </ligand>
</feature>
<feature type="binding site" evidence="1">
    <location>
        <position position="366"/>
    </location>
    <ligand>
        <name>(2R)-2-phosphoglycerate</name>
        <dbReference type="ChEBI" id="CHEBI:58289"/>
    </ligand>
</feature>
<feature type="binding site" evidence="1">
    <location>
        <position position="387"/>
    </location>
    <ligand>
        <name>(2R)-2-phosphoglycerate</name>
        <dbReference type="ChEBI" id="CHEBI:58289"/>
    </ligand>
</feature>
<organism>
    <name type="scientific">Brucella ovis (strain ATCC 25840 / 63/290 / NCTC 10512)</name>
    <dbReference type="NCBI Taxonomy" id="444178"/>
    <lineage>
        <taxon>Bacteria</taxon>
        <taxon>Pseudomonadati</taxon>
        <taxon>Pseudomonadota</taxon>
        <taxon>Alphaproteobacteria</taxon>
        <taxon>Hyphomicrobiales</taxon>
        <taxon>Brucellaceae</taxon>
        <taxon>Brucella/Ochrobactrum group</taxon>
        <taxon>Brucella</taxon>
    </lineage>
</organism>
<gene>
    <name evidence="1" type="primary">eno</name>
    <name type="ordered locus">BOV_1092</name>
</gene>
<name>ENO_BRUO2</name>
<protein>
    <recommendedName>
        <fullName evidence="1">Enolase</fullName>
        <ecNumber evidence="1">4.2.1.11</ecNumber>
    </recommendedName>
    <alternativeName>
        <fullName evidence="1">2-phospho-D-glycerate hydro-lyase</fullName>
    </alternativeName>
    <alternativeName>
        <fullName evidence="1">2-phosphoglycerate dehydratase</fullName>
    </alternativeName>
</protein>
<reference key="1">
    <citation type="journal article" date="2009" name="PLoS ONE">
        <title>Genome degradation in Brucella ovis corresponds with narrowing of its host range and tissue tropism.</title>
        <authorList>
            <person name="Tsolis R.M."/>
            <person name="Seshadri R."/>
            <person name="Santos R.L."/>
            <person name="Sangari F.J."/>
            <person name="Lobo J.M."/>
            <person name="de Jong M.F."/>
            <person name="Ren Q."/>
            <person name="Myers G."/>
            <person name="Brinkac L.M."/>
            <person name="Nelson W.C."/>
            <person name="Deboy R.T."/>
            <person name="Angiuoli S."/>
            <person name="Khouri H."/>
            <person name="Dimitrov G."/>
            <person name="Robinson J.R."/>
            <person name="Mulligan S."/>
            <person name="Walker R.L."/>
            <person name="Elzer P.E."/>
            <person name="Hassan K.A."/>
            <person name="Paulsen I.T."/>
        </authorList>
    </citation>
    <scope>NUCLEOTIDE SEQUENCE [LARGE SCALE GENOMIC DNA]</scope>
    <source>
        <strain>ATCC 25840 / 63/290 / NCTC 10512</strain>
    </source>
</reference>
<sequence length="425" mass="45288">MTAIIDIVGREILDSRGNPTVEVDVVLEDGSFGRAAVPSGASTGAHEAVELRDGGSRYLGKGVEKAVEVVNGKIFDAIAGMDAENQLLIDQTLIDLDGSANKGNLGANAILGVSLAVAKAAAQASGLPLYRYVGGTNAHVLPVPMMNIINGGAHADNPIDFQEFMILPVGATSIREAVRYGSEVFHTLKKRLKDAGHNTNVGDEGGFAPNLKNAQAALDFIMESIEKAGFKPGEDIALGLDCAATEFFKDGNYVYEGERKTRDPKAQAKYLAKLASDYPIVTIEDGMAEDDWEGWKYLTDLIGNKCQLVGDDLFVTNSARLRDGIRLGVANSILVKVNQIGSLSETLDAVETAHKAGYTAVMSHRSGETEDSTIADLAVATNCGQIKTGSLARSDRTAKYNQLIRIEEELGKQARYAGRSALKLL</sequence>
<comment type="function">
    <text evidence="1">Catalyzes the reversible conversion of 2-phosphoglycerate (2-PG) into phosphoenolpyruvate (PEP). It is essential for the degradation of carbohydrates via glycolysis.</text>
</comment>
<comment type="catalytic activity">
    <reaction evidence="1">
        <text>(2R)-2-phosphoglycerate = phosphoenolpyruvate + H2O</text>
        <dbReference type="Rhea" id="RHEA:10164"/>
        <dbReference type="ChEBI" id="CHEBI:15377"/>
        <dbReference type="ChEBI" id="CHEBI:58289"/>
        <dbReference type="ChEBI" id="CHEBI:58702"/>
        <dbReference type="EC" id="4.2.1.11"/>
    </reaction>
</comment>
<comment type="cofactor">
    <cofactor evidence="1">
        <name>Mg(2+)</name>
        <dbReference type="ChEBI" id="CHEBI:18420"/>
    </cofactor>
    <text evidence="1">Binds a second Mg(2+) ion via substrate during catalysis.</text>
</comment>
<comment type="pathway">
    <text evidence="1">Carbohydrate degradation; glycolysis; pyruvate from D-glyceraldehyde 3-phosphate: step 4/5.</text>
</comment>
<comment type="subcellular location">
    <subcellularLocation>
        <location evidence="1">Cytoplasm</location>
    </subcellularLocation>
    <subcellularLocation>
        <location evidence="1">Secreted</location>
    </subcellularLocation>
    <subcellularLocation>
        <location evidence="1">Cell surface</location>
    </subcellularLocation>
    <text evidence="1">Fractions of enolase are present in both the cytoplasm and on the cell surface.</text>
</comment>
<comment type="similarity">
    <text evidence="1">Belongs to the enolase family.</text>
</comment>
<dbReference type="EC" id="4.2.1.11" evidence="1"/>
<dbReference type="EMBL" id="CP000708">
    <property type="protein sequence ID" value="ABQ61705.1"/>
    <property type="molecule type" value="Genomic_DNA"/>
</dbReference>
<dbReference type="RefSeq" id="WP_006012652.1">
    <property type="nucleotide sequence ID" value="NC_009505.1"/>
</dbReference>
<dbReference type="SMR" id="A5VQQ7"/>
<dbReference type="GeneID" id="45124509"/>
<dbReference type="KEGG" id="bov:BOV_1092"/>
<dbReference type="HOGENOM" id="CLU_031223_2_1_5"/>
<dbReference type="PhylomeDB" id="A5VQQ7"/>
<dbReference type="UniPathway" id="UPA00109">
    <property type="reaction ID" value="UER00187"/>
</dbReference>
<dbReference type="Proteomes" id="UP000006383">
    <property type="component" value="Chromosome I"/>
</dbReference>
<dbReference type="GO" id="GO:0009986">
    <property type="term" value="C:cell surface"/>
    <property type="evidence" value="ECO:0007669"/>
    <property type="project" value="UniProtKB-SubCell"/>
</dbReference>
<dbReference type="GO" id="GO:0005576">
    <property type="term" value="C:extracellular region"/>
    <property type="evidence" value="ECO:0007669"/>
    <property type="project" value="UniProtKB-SubCell"/>
</dbReference>
<dbReference type="GO" id="GO:0000015">
    <property type="term" value="C:phosphopyruvate hydratase complex"/>
    <property type="evidence" value="ECO:0007669"/>
    <property type="project" value="InterPro"/>
</dbReference>
<dbReference type="GO" id="GO:0000287">
    <property type="term" value="F:magnesium ion binding"/>
    <property type="evidence" value="ECO:0007669"/>
    <property type="project" value="UniProtKB-UniRule"/>
</dbReference>
<dbReference type="GO" id="GO:0004634">
    <property type="term" value="F:phosphopyruvate hydratase activity"/>
    <property type="evidence" value="ECO:0007669"/>
    <property type="project" value="UniProtKB-UniRule"/>
</dbReference>
<dbReference type="GO" id="GO:0006096">
    <property type="term" value="P:glycolytic process"/>
    <property type="evidence" value="ECO:0007669"/>
    <property type="project" value="UniProtKB-UniRule"/>
</dbReference>
<dbReference type="CDD" id="cd03313">
    <property type="entry name" value="enolase"/>
    <property type="match status" value="1"/>
</dbReference>
<dbReference type="FunFam" id="3.20.20.120:FF:000001">
    <property type="entry name" value="Enolase"/>
    <property type="match status" value="1"/>
</dbReference>
<dbReference type="FunFam" id="3.30.390.10:FF:000001">
    <property type="entry name" value="Enolase"/>
    <property type="match status" value="1"/>
</dbReference>
<dbReference type="Gene3D" id="3.20.20.120">
    <property type="entry name" value="Enolase-like C-terminal domain"/>
    <property type="match status" value="1"/>
</dbReference>
<dbReference type="Gene3D" id="3.30.390.10">
    <property type="entry name" value="Enolase-like, N-terminal domain"/>
    <property type="match status" value="1"/>
</dbReference>
<dbReference type="HAMAP" id="MF_00318">
    <property type="entry name" value="Enolase"/>
    <property type="match status" value="1"/>
</dbReference>
<dbReference type="InterPro" id="IPR000941">
    <property type="entry name" value="Enolase"/>
</dbReference>
<dbReference type="InterPro" id="IPR036849">
    <property type="entry name" value="Enolase-like_C_sf"/>
</dbReference>
<dbReference type="InterPro" id="IPR029017">
    <property type="entry name" value="Enolase-like_N"/>
</dbReference>
<dbReference type="InterPro" id="IPR020810">
    <property type="entry name" value="Enolase_C"/>
</dbReference>
<dbReference type="InterPro" id="IPR020809">
    <property type="entry name" value="Enolase_CS"/>
</dbReference>
<dbReference type="InterPro" id="IPR020811">
    <property type="entry name" value="Enolase_N"/>
</dbReference>
<dbReference type="NCBIfam" id="TIGR01060">
    <property type="entry name" value="eno"/>
    <property type="match status" value="1"/>
</dbReference>
<dbReference type="PANTHER" id="PTHR11902">
    <property type="entry name" value="ENOLASE"/>
    <property type="match status" value="1"/>
</dbReference>
<dbReference type="PANTHER" id="PTHR11902:SF1">
    <property type="entry name" value="ENOLASE"/>
    <property type="match status" value="1"/>
</dbReference>
<dbReference type="Pfam" id="PF00113">
    <property type="entry name" value="Enolase_C"/>
    <property type="match status" value="1"/>
</dbReference>
<dbReference type="Pfam" id="PF03952">
    <property type="entry name" value="Enolase_N"/>
    <property type="match status" value="1"/>
</dbReference>
<dbReference type="PIRSF" id="PIRSF001400">
    <property type="entry name" value="Enolase"/>
    <property type="match status" value="1"/>
</dbReference>
<dbReference type="PRINTS" id="PR00148">
    <property type="entry name" value="ENOLASE"/>
</dbReference>
<dbReference type="SFLD" id="SFLDS00001">
    <property type="entry name" value="Enolase"/>
    <property type="match status" value="1"/>
</dbReference>
<dbReference type="SFLD" id="SFLDF00002">
    <property type="entry name" value="enolase"/>
    <property type="match status" value="1"/>
</dbReference>
<dbReference type="SMART" id="SM01192">
    <property type="entry name" value="Enolase_C"/>
    <property type="match status" value="1"/>
</dbReference>
<dbReference type="SMART" id="SM01193">
    <property type="entry name" value="Enolase_N"/>
    <property type="match status" value="1"/>
</dbReference>
<dbReference type="SUPFAM" id="SSF51604">
    <property type="entry name" value="Enolase C-terminal domain-like"/>
    <property type="match status" value="1"/>
</dbReference>
<dbReference type="SUPFAM" id="SSF54826">
    <property type="entry name" value="Enolase N-terminal domain-like"/>
    <property type="match status" value="1"/>
</dbReference>
<dbReference type="PROSITE" id="PS00164">
    <property type="entry name" value="ENOLASE"/>
    <property type="match status" value="1"/>
</dbReference>